<evidence type="ECO:0000250" key="1"/>
<evidence type="ECO:0000255" key="2">
    <source>
        <dbReference type="PROSITE-ProRule" id="PRU01066"/>
    </source>
</evidence>
<evidence type="ECO:0000305" key="3"/>
<accession>Q9U616</accession>
<accession>Q9VP59</accession>
<feature type="transit peptide" description="Mitochondrion" evidence="1">
    <location>
        <begin position="1"/>
        <end status="unknown"/>
    </location>
</feature>
<feature type="chain" id="PRO_0000010728" description="Glycine cleavage system H protein, mitochondrial">
    <location>
        <begin status="unknown"/>
        <end position="165"/>
    </location>
</feature>
<feature type="domain" description="Lipoyl-binding" evidence="2">
    <location>
        <begin position="57"/>
        <end position="139"/>
    </location>
</feature>
<feature type="modified residue" description="N6-lipoyllysine" evidence="1 2">
    <location>
        <position position="98"/>
    </location>
</feature>
<name>GCSH_DROME</name>
<comment type="function">
    <text evidence="1">The glycine cleavage system catalyzes the degradation of glycine. The H protein shuttles the methylamine group of glycine from the P protein to the T protein (By similarity).</text>
</comment>
<comment type="cofactor">
    <cofactor evidence="1">
        <name>(R)-lipoate</name>
        <dbReference type="ChEBI" id="CHEBI:83088"/>
    </cofactor>
    <text evidence="1">Binds 1 lipoyl cofactor covalently.</text>
</comment>
<comment type="subunit">
    <text evidence="1">The glycine cleavage system is composed of four proteins: P, T, L and H.</text>
</comment>
<comment type="subcellular location">
    <subcellularLocation>
        <location evidence="1">Mitochondrion</location>
    </subcellularLocation>
</comment>
<comment type="similarity">
    <text evidence="3">Belongs to the GcvH family.</text>
</comment>
<keyword id="KW-0450">Lipoyl</keyword>
<keyword id="KW-0496">Mitochondrion</keyword>
<keyword id="KW-1185">Reference proteome</keyword>
<keyword id="KW-0809">Transit peptide</keyword>
<sequence length="165" mass="18002">MVFITKFARIGLQAARQLSVTPLGAVQARAIHLTSLLAKERRYTNKHEWVEVVSGSNAIVGISSYAQEALGDVVFAQLPEPGTELKQDDECGALESVKAASEVYSPVSGKVIEKNAEVEDTPALVNSSCYEKGWLFKVDLKNPKELEALMTEDQYKAFLSSSGDH</sequence>
<gene>
    <name type="primary">ppl</name>
    <name type="ORF">CG7758</name>
</gene>
<reference key="1">
    <citation type="journal article" date="1999" name="Development">
        <title>Suppression of food intake and growth by amino acids in Drosophila: the role of pumpless, a fat body expressed gene with homology to vertebrate glycine cleavage system.</title>
        <authorList>
            <person name="Zinke I."/>
            <person name="Kirchner C."/>
            <person name="Chao L.C."/>
            <person name="Tetzlaff M.T."/>
            <person name="Pankratz M.J."/>
        </authorList>
    </citation>
    <scope>NUCLEOTIDE SEQUENCE</scope>
</reference>
<reference key="2">
    <citation type="journal article" date="2000" name="Science">
        <title>The genome sequence of Drosophila melanogaster.</title>
        <authorList>
            <person name="Adams M.D."/>
            <person name="Celniker S.E."/>
            <person name="Holt R.A."/>
            <person name="Evans C.A."/>
            <person name="Gocayne J.D."/>
            <person name="Amanatides P.G."/>
            <person name="Scherer S.E."/>
            <person name="Li P.W."/>
            <person name="Hoskins R.A."/>
            <person name="Galle R.F."/>
            <person name="George R.A."/>
            <person name="Lewis S.E."/>
            <person name="Richards S."/>
            <person name="Ashburner M."/>
            <person name="Henderson S.N."/>
            <person name="Sutton G.G."/>
            <person name="Wortman J.R."/>
            <person name="Yandell M.D."/>
            <person name="Zhang Q."/>
            <person name="Chen L.X."/>
            <person name="Brandon R.C."/>
            <person name="Rogers Y.-H.C."/>
            <person name="Blazej R.G."/>
            <person name="Champe M."/>
            <person name="Pfeiffer B.D."/>
            <person name="Wan K.H."/>
            <person name="Doyle C."/>
            <person name="Baxter E.G."/>
            <person name="Helt G."/>
            <person name="Nelson C.R."/>
            <person name="Miklos G.L.G."/>
            <person name="Abril J.F."/>
            <person name="Agbayani A."/>
            <person name="An H.-J."/>
            <person name="Andrews-Pfannkoch C."/>
            <person name="Baldwin D."/>
            <person name="Ballew R.M."/>
            <person name="Basu A."/>
            <person name="Baxendale J."/>
            <person name="Bayraktaroglu L."/>
            <person name="Beasley E.M."/>
            <person name="Beeson K.Y."/>
            <person name="Benos P.V."/>
            <person name="Berman B.P."/>
            <person name="Bhandari D."/>
            <person name="Bolshakov S."/>
            <person name="Borkova D."/>
            <person name="Botchan M.R."/>
            <person name="Bouck J."/>
            <person name="Brokstein P."/>
            <person name="Brottier P."/>
            <person name="Burtis K.C."/>
            <person name="Busam D.A."/>
            <person name="Butler H."/>
            <person name="Cadieu E."/>
            <person name="Center A."/>
            <person name="Chandra I."/>
            <person name="Cherry J.M."/>
            <person name="Cawley S."/>
            <person name="Dahlke C."/>
            <person name="Davenport L.B."/>
            <person name="Davies P."/>
            <person name="de Pablos B."/>
            <person name="Delcher A."/>
            <person name="Deng Z."/>
            <person name="Mays A.D."/>
            <person name="Dew I."/>
            <person name="Dietz S.M."/>
            <person name="Dodson K."/>
            <person name="Doup L.E."/>
            <person name="Downes M."/>
            <person name="Dugan-Rocha S."/>
            <person name="Dunkov B.C."/>
            <person name="Dunn P."/>
            <person name="Durbin K.J."/>
            <person name="Evangelista C.C."/>
            <person name="Ferraz C."/>
            <person name="Ferriera S."/>
            <person name="Fleischmann W."/>
            <person name="Fosler C."/>
            <person name="Gabrielian A.E."/>
            <person name="Garg N.S."/>
            <person name="Gelbart W.M."/>
            <person name="Glasser K."/>
            <person name="Glodek A."/>
            <person name="Gong F."/>
            <person name="Gorrell J.H."/>
            <person name="Gu Z."/>
            <person name="Guan P."/>
            <person name="Harris M."/>
            <person name="Harris N.L."/>
            <person name="Harvey D.A."/>
            <person name="Heiman T.J."/>
            <person name="Hernandez J.R."/>
            <person name="Houck J."/>
            <person name="Hostin D."/>
            <person name="Houston K.A."/>
            <person name="Howland T.J."/>
            <person name="Wei M.-H."/>
            <person name="Ibegwam C."/>
            <person name="Jalali M."/>
            <person name="Kalush F."/>
            <person name="Karpen G.H."/>
            <person name="Ke Z."/>
            <person name="Kennison J.A."/>
            <person name="Ketchum K.A."/>
            <person name="Kimmel B.E."/>
            <person name="Kodira C.D."/>
            <person name="Kraft C.L."/>
            <person name="Kravitz S."/>
            <person name="Kulp D."/>
            <person name="Lai Z."/>
            <person name="Lasko P."/>
            <person name="Lei Y."/>
            <person name="Levitsky A.A."/>
            <person name="Li J.H."/>
            <person name="Li Z."/>
            <person name="Liang Y."/>
            <person name="Lin X."/>
            <person name="Liu X."/>
            <person name="Mattei B."/>
            <person name="McIntosh T.C."/>
            <person name="McLeod M.P."/>
            <person name="McPherson D."/>
            <person name="Merkulov G."/>
            <person name="Milshina N.V."/>
            <person name="Mobarry C."/>
            <person name="Morris J."/>
            <person name="Moshrefi A."/>
            <person name="Mount S.M."/>
            <person name="Moy M."/>
            <person name="Murphy B."/>
            <person name="Murphy L."/>
            <person name="Muzny D.M."/>
            <person name="Nelson D.L."/>
            <person name="Nelson D.R."/>
            <person name="Nelson K.A."/>
            <person name="Nixon K."/>
            <person name="Nusskern D.R."/>
            <person name="Pacleb J.M."/>
            <person name="Palazzolo M."/>
            <person name="Pittman G.S."/>
            <person name="Pan S."/>
            <person name="Pollard J."/>
            <person name="Puri V."/>
            <person name="Reese M.G."/>
            <person name="Reinert K."/>
            <person name="Remington K."/>
            <person name="Saunders R.D.C."/>
            <person name="Scheeler F."/>
            <person name="Shen H."/>
            <person name="Shue B.C."/>
            <person name="Siden-Kiamos I."/>
            <person name="Simpson M."/>
            <person name="Skupski M.P."/>
            <person name="Smith T.J."/>
            <person name="Spier E."/>
            <person name="Spradling A.C."/>
            <person name="Stapleton M."/>
            <person name="Strong R."/>
            <person name="Sun E."/>
            <person name="Svirskas R."/>
            <person name="Tector C."/>
            <person name="Turner R."/>
            <person name="Venter E."/>
            <person name="Wang A.H."/>
            <person name="Wang X."/>
            <person name="Wang Z.-Y."/>
            <person name="Wassarman D.A."/>
            <person name="Weinstock G.M."/>
            <person name="Weissenbach J."/>
            <person name="Williams S.M."/>
            <person name="Woodage T."/>
            <person name="Worley K.C."/>
            <person name="Wu D."/>
            <person name="Yang S."/>
            <person name="Yao Q.A."/>
            <person name="Ye J."/>
            <person name="Yeh R.-F."/>
            <person name="Zaveri J.S."/>
            <person name="Zhan M."/>
            <person name="Zhang G."/>
            <person name="Zhao Q."/>
            <person name="Zheng L."/>
            <person name="Zheng X.H."/>
            <person name="Zhong F.N."/>
            <person name="Zhong W."/>
            <person name="Zhou X."/>
            <person name="Zhu S.C."/>
            <person name="Zhu X."/>
            <person name="Smith H.O."/>
            <person name="Gibbs R.A."/>
            <person name="Myers E.W."/>
            <person name="Rubin G.M."/>
            <person name="Venter J.C."/>
        </authorList>
    </citation>
    <scope>NUCLEOTIDE SEQUENCE [LARGE SCALE GENOMIC DNA]</scope>
    <source>
        <strain>Berkeley</strain>
    </source>
</reference>
<reference key="3">
    <citation type="journal article" date="2002" name="Genome Biol.">
        <title>Annotation of the Drosophila melanogaster euchromatic genome: a systematic review.</title>
        <authorList>
            <person name="Misra S."/>
            <person name="Crosby M.A."/>
            <person name="Mungall C.J."/>
            <person name="Matthews B.B."/>
            <person name="Campbell K.S."/>
            <person name="Hradecky P."/>
            <person name="Huang Y."/>
            <person name="Kaminker J.S."/>
            <person name="Millburn G.H."/>
            <person name="Prochnik S.E."/>
            <person name="Smith C.D."/>
            <person name="Tupy J.L."/>
            <person name="Whitfield E.J."/>
            <person name="Bayraktaroglu L."/>
            <person name="Berman B.P."/>
            <person name="Bettencourt B.R."/>
            <person name="Celniker S.E."/>
            <person name="de Grey A.D.N.J."/>
            <person name="Drysdale R.A."/>
            <person name="Harris N.L."/>
            <person name="Richter J."/>
            <person name="Russo S."/>
            <person name="Schroeder A.J."/>
            <person name="Shu S.Q."/>
            <person name="Stapleton M."/>
            <person name="Yamada C."/>
            <person name="Ashburner M."/>
            <person name="Gelbart W.M."/>
            <person name="Rubin G.M."/>
            <person name="Lewis S.E."/>
        </authorList>
    </citation>
    <scope>GENOME REANNOTATION</scope>
    <source>
        <strain>Berkeley</strain>
    </source>
</reference>
<reference key="4">
    <citation type="journal article" date="2002" name="Genome Biol.">
        <title>A Drosophila full-length cDNA resource.</title>
        <authorList>
            <person name="Stapleton M."/>
            <person name="Carlson J.W."/>
            <person name="Brokstein P."/>
            <person name="Yu C."/>
            <person name="Champe M."/>
            <person name="George R.A."/>
            <person name="Guarin H."/>
            <person name="Kronmiller B."/>
            <person name="Pacleb J.M."/>
            <person name="Park S."/>
            <person name="Wan K.H."/>
            <person name="Rubin G.M."/>
            <person name="Celniker S.E."/>
        </authorList>
    </citation>
    <scope>NUCLEOTIDE SEQUENCE [LARGE SCALE MRNA]</scope>
    <source>
        <strain>Berkeley</strain>
        <tissue>Larva</tissue>
        <tissue>Pupae</tissue>
    </source>
</reference>
<organism>
    <name type="scientific">Drosophila melanogaster</name>
    <name type="common">Fruit fly</name>
    <dbReference type="NCBI Taxonomy" id="7227"/>
    <lineage>
        <taxon>Eukaryota</taxon>
        <taxon>Metazoa</taxon>
        <taxon>Ecdysozoa</taxon>
        <taxon>Arthropoda</taxon>
        <taxon>Hexapoda</taxon>
        <taxon>Insecta</taxon>
        <taxon>Pterygota</taxon>
        <taxon>Neoptera</taxon>
        <taxon>Endopterygota</taxon>
        <taxon>Diptera</taxon>
        <taxon>Brachycera</taxon>
        <taxon>Muscomorpha</taxon>
        <taxon>Ephydroidea</taxon>
        <taxon>Drosophilidae</taxon>
        <taxon>Drosophila</taxon>
        <taxon>Sophophora</taxon>
    </lineage>
</organism>
<dbReference type="EMBL" id="AF203725">
    <property type="protein sequence ID" value="AAF13277.1"/>
    <property type="molecule type" value="mRNA"/>
</dbReference>
<dbReference type="EMBL" id="AE014296">
    <property type="protein sequence ID" value="AAF51697.3"/>
    <property type="molecule type" value="Genomic_DNA"/>
</dbReference>
<dbReference type="EMBL" id="AY075433">
    <property type="protein sequence ID" value="AAL68248.1"/>
    <property type="molecule type" value="mRNA"/>
</dbReference>
<dbReference type="RefSeq" id="NP_524197.1">
    <property type="nucleotide sequence ID" value="NM_079473.4"/>
</dbReference>
<dbReference type="SMR" id="Q9U616"/>
<dbReference type="BioGRID" id="65597">
    <property type="interactions" value="8"/>
</dbReference>
<dbReference type="DIP" id="DIP-19395N"/>
<dbReference type="FunCoup" id="Q9U616">
    <property type="interactions" value="1129"/>
</dbReference>
<dbReference type="IntAct" id="Q9U616">
    <property type="interactions" value="29"/>
</dbReference>
<dbReference type="STRING" id="7227.FBpp0078066"/>
<dbReference type="PaxDb" id="7227-FBpp0078066"/>
<dbReference type="DNASU" id="40349"/>
<dbReference type="EnsemblMetazoa" id="FBtr0078412">
    <property type="protein sequence ID" value="FBpp0078066"/>
    <property type="gene ID" value="FBgn0027945"/>
</dbReference>
<dbReference type="GeneID" id="40349"/>
<dbReference type="KEGG" id="dme:Dmel_CG7758"/>
<dbReference type="UCSC" id="CG7758-RA">
    <property type="organism name" value="d. melanogaster"/>
</dbReference>
<dbReference type="AGR" id="FB:FBgn0027945"/>
<dbReference type="CTD" id="5493"/>
<dbReference type="FlyBase" id="FBgn0027945">
    <property type="gene designation" value="ppl"/>
</dbReference>
<dbReference type="VEuPathDB" id="VectorBase:FBgn0027945"/>
<dbReference type="eggNOG" id="KOG3373">
    <property type="taxonomic scope" value="Eukaryota"/>
</dbReference>
<dbReference type="GeneTree" id="ENSGT00390000011666"/>
<dbReference type="HOGENOM" id="CLU_097408_1_1_1"/>
<dbReference type="InParanoid" id="Q9U616"/>
<dbReference type="OMA" id="KEHEWIR"/>
<dbReference type="OrthoDB" id="10264154at2759"/>
<dbReference type="PhylomeDB" id="Q9U616"/>
<dbReference type="Reactome" id="R-DME-6783984">
    <property type="pathway name" value="Glycine degradation"/>
</dbReference>
<dbReference type="Reactome" id="R-DME-9857492">
    <property type="pathway name" value="Protein lipoylation"/>
</dbReference>
<dbReference type="BioGRID-ORCS" id="40349">
    <property type="hits" value="0 hits in 3 CRISPR screens"/>
</dbReference>
<dbReference type="GenomeRNAi" id="40349"/>
<dbReference type="PRO" id="PR:Q9U616"/>
<dbReference type="Proteomes" id="UP000000803">
    <property type="component" value="Chromosome 3L"/>
</dbReference>
<dbReference type="Bgee" id="FBgn0027945">
    <property type="expression patterns" value="Expressed in head capsule and 140 other cell types or tissues"/>
</dbReference>
<dbReference type="GO" id="GO:0005960">
    <property type="term" value="C:glycine cleavage complex"/>
    <property type="evidence" value="ECO:0000250"/>
    <property type="project" value="FlyBase"/>
</dbReference>
<dbReference type="GO" id="GO:0005759">
    <property type="term" value="C:mitochondrial matrix"/>
    <property type="evidence" value="ECO:0000250"/>
    <property type="project" value="FlyBase"/>
</dbReference>
<dbReference type="GO" id="GO:0005739">
    <property type="term" value="C:mitochondrion"/>
    <property type="evidence" value="ECO:0000250"/>
    <property type="project" value="FlyBase"/>
</dbReference>
<dbReference type="GO" id="GO:0006546">
    <property type="term" value="P:glycine catabolic process"/>
    <property type="evidence" value="ECO:0000250"/>
    <property type="project" value="FlyBase"/>
</dbReference>
<dbReference type="GO" id="GO:0019464">
    <property type="term" value="P:glycine decarboxylation via glycine cleavage system"/>
    <property type="evidence" value="ECO:0000250"/>
    <property type="project" value="FlyBase"/>
</dbReference>
<dbReference type="CDD" id="cd06848">
    <property type="entry name" value="GCS_H"/>
    <property type="match status" value="1"/>
</dbReference>
<dbReference type="FunFam" id="2.40.50.100:FF:000045">
    <property type="entry name" value="Glycine cleavage system H protein"/>
    <property type="match status" value="1"/>
</dbReference>
<dbReference type="Gene3D" id="2.40.50.100">
    <property type="match status" value="1"/>
</dbReference>
<dbReference type="HAMAP" id="MF_00272">
    <property type="entry name" value="GcvH"/>
    <property type="match status" value="1"/>
</dbReference>
<dbReference type="InterPro" id="IPR003016">
    <property type="entry name" value="2-oxoA_DH_lipoyl-BS"/>
</dbReference>
<dbReference type="InterPro" id="IPR000089">
    <property type="entry name" value="Biotin_lipoyl"/>
</dbReference>
<dbReference type="InterPro" id="IPR002930">
    <property type="entry name" value="GCV_H"/>
</dbReference>
<dbReference type="InterPro" id="IPR033753">
    <property type="entry name" value="GCV_H/Fam206"/>
</dbReference>
<dbReference type="InterPro" id="IPR017453">
    <property type="entry name" value="GCV_H_sub"/>
</dbReference>
<dbReference type="InterPro" id="IPR011053">
    <property type="entry name" value="Single_hybrid_motif"/>
</dbReference>
<dbReference type="NCBIfam" id="TIGR00527">
    <property type="entry name" value="gcvH"/>
    <property type="match status" value="1"/>
</dbReference>
<dbReference type="NCBIfam" id="NF002270">
    <property type="entry name" value="PRK01202.1"/>
    <property type="match status" value="1"/>
</dbReference>
<dbReference type="PANTHER" id="PTHR11715">
    <property type="entry name" value="GLYCINE CLEAVAGE SYSTEM H PROTEIN"/>
    <property type="match status" value="1"/>
</dbReference>
<dbReference type="PANTHER" id="PTHR11715:SF3">
    <property type="entry name" value="GLYCINE CLEAVAGE SYSTEM H PROTEIN-RELATED"/>
    <property type="match status" value="1"/>
</dbReference>
<dbReference type="Pfam" id="PF01597">
    <property type="entry name" value="GCV_H"/>
    <property type="match status" value="1"/>
</dbReference>
<dbReference type="SUPFAM" id="SSF51230">
    <property type="entry name" value="Single hybrid motif"/>
    <property type="match status" value="1"/>
</dbReference>
<dbReference type="PROSITE" id="PS50968">
    <property type="entry name" value="BIOTINYL_LIPOYL"/>
    <property type="match status" value="1"/>
</dbReference>
<dbReference type="PROSITE" id="PS00189">
    <property type="entry name" value="LIPOYL"/>
    <property type="match status" value="1"/>
</dbReference>
<protein>
    <recommendedName>
        <fullName>Glycine cleavage system H protein, mitochondrial</fullName>
    </recommendedName>
    <alternativeName>
        <fullName>Protein pumpless</fullName>
    </alternativeName>
</protein>
<proteinExistence type="evidence at transcript level"/>